<accession>Q5R0M0</accession>
<feature type="chain" id="PRO_0000242561" description="UDP-N-acetylmuramate--L-alanine ligase">
    <location>
        <begin position="1"/>
        <end position="490"/>
    </location>
</feature>
<feature type="binding site" evidence="1">
    <location>
        <begin position="130"/>
        <end position="136"/>
    </location>
    <ligand>
        <name>ATP</name>
        <dbReference type="ChEBI" id="CHEBI:30616"/>
    </ligand>
</feature>
<dbReference type="EC" id="6.3.2.8" evidence="1"/>
<dbReference type="EMBL" id="AE017340">
    <property type="protein sequence ID" value="AAV81280.1"/>
    <property type="molecule type" value="Genomic_DNA"/>
</dbReference>
<dbReference type="RefSeq" id="WP_011233698.1">
    <property type="nucleotide sequence ID" value="NC_006512.1"/>
</dbReference>
<dbReference type="SMR" id="Q5R0M0"/>
<dbReference type="STRING" id="283942.IL0437"/>
<dbReference type="GeneID" id="41335589"/>
<dbReference type="KEGG" id="ilo:IL0437"/>
<dbReference type="eggNOG" id="COG0773">
    <property type="taxonomic scope" value="Bacteria"/>
</dbReference>
<dbReference type="HOGENOM" id="CLU_028104_2_2_6"/>
<dbReference type="OrthoDB" id="9804126at2"/>
<dbReference type="UniPathway" id="UPA00219"/>
<dbReference type="Proteomes" id="UP000001171">
    <property type="component" value="Chromosome"/>
</dbReference>
<dbReference type="GO" id="GO:0005737">
    <property type="term" value="C:cytoplasm"/>
    <property type="evidence" value="ECO:0007669"/>
    <property type="project" value="UniProtKB-SubCell"/>
</dbReference>
<dbReference type="GO" id="GO:0005524">
    <property type="term" value="F:ATP binding"/>
    <property type="evidence" value="ECO:0007669"/>
    <property type="project" value="UniProtKB-UniRule"/>
</dbReference>
<dbReference type="GO" id="GO:0008763">
    <property type="term" value="F:UDP-N-acetylmuramate-L-alanine ligase activity"/>
    <property type="evidence" value="ECO:0007669"/>
    <property type="project" value="UniProtKB-UniRule"/>
</dbReference>
<dbReference type="GO" id="GO:0051301">
    <property type="term" value="P:cell division"/>
    <property type="evidence" value="ECO:0007669"/>
    <property type="project" value="UniProtKB-KW"/>
</dbReference>
<dbReference type="GO" id="GO:0071555">
    <property type="term" value="P:cell wall organization"/>
    <property type="evidence" value="ECO:0007669"/>
    <property type="project" value="UniProtKB-KW"/>
</dbReference>
<dbReference type="GO" id="GO:0009252">
    <property type="term" value="P:peptidoglycan biosynthetic process"/>
    <property type="evidence" value="ECO:0007669"/>
    <property type="project" value="UniProtKB-UniRule"/>
</dbReference>
<dbReference type="GO" id="GO:0008360">
    <property type="term" value="P:regulation of cell shape"/>
    <property type="evidence" value="ECO:0007669"/>
    <property type="project" value="UniProtKB-KW"/>
</dbReference>
<dbReference type="FunFam" id="3.40.1190.10:FF:000001">
    <property type="entry name" value="UDP-N-acetylmuramate--L-alanine ligase"/>
    <property type="match status" value="1"/>
</dbReference>
<dbReference type="FunFam" id="3.40.50.720:FF:000046">
    <property type="entry name" value="UDP-N-acetylmuramate--L-alanine ligase"/>
    <property type="match status" value="1"/>
</dbReference>
<dbReference type="Gene3D" id="3.90.190.20">
    <property type="entry name" value="Mur ligase, C-terminal domain"/>
    <property type="match status" value="1"/>
</dbReference>
<dbReference type="Gene3D" id="3.40.1190.10">
    <property type="entry name" value="Mur-like, catalytic domain"/>
    <property type="match status" value="1"/>
</dbReference>
<dbReference type="Gene3D" id="3.40.50.720">
    <property type="entry name" value="NAD(P)-binding Rossmann-like Domain"/>
    <property type="match status" value="1"/>
</dbReference>
<dbReference type="HAMAP" id="MF_00046">
    <property type="entry name" value="MurC"/>
    <property type="match status" value="1"/>
</dbReference>
<dbReference type="InterPro" id="IPR036565">
    <property type="entry name" value="Mur-like_cat_sf"/>
</dbReference>
<dbReference type="InterPro" id="IPR004101">
    <property type="entry name" value="Mur_ligase_C"/>
</dbReference>
<dbReference type="InterPro" id="IPR036615">
    <property type="entry name" value="Mur_ligase_C_dom_sf"/>
</dbReference>
<dbReference type="InterPro" id="IPR013221">
    <property type="entry name" value="Mur_ligase_cen"/>
</dbReference>
<dbReference type="InterPro" id="IPR000713">
    <property type="entry name" value="Mur_ligase_N"/>
</dbReference>
<dbReference type="InterPro" id="IPR050061">
    <property type="entry name" value="MurCDEF_pg_biosynth"/>
</dbReference>
<dbReference type="InterPro" id="IPR005758">
    <property type="entry name" value="UDP-N-AcMur_Ala_ligase_MurC"/>
</dbReference>
<dbReference type="NCBIfam" id="TIGR01082">
    <property type="entry name" value="murC"/>
    <property type="match status" value="1"/>
</dbReference>
<dbReference type="PANTHER" id="PTHR43445:SF3">
    <property type="entry name" value="UDP-N-ACETYLMURAMATE--L-ALANINE LIGASE"/>
    <property type="match status" value="1"/>
</dbReference>
<dbReference type="PANTHER" id="PTHR43445">
    <property type="entry name" value="UDP-N-ACETYLMURAMATE--L-ALANINE LIGASE-RELATED"/>
    <property type="match status" value="1"/>
</dbReference>
<dbReference type="Pfam" id="PF01225">
    <property type="entry name" value="Mur_ligase"/>
    <property type="match status" value="1"/>
</dbReference>
<dbReference type="Pfam" id="PF02875">
    <property type="entry name" value="Mur_ligase_C"/>
    <property type="match status" value="1"/>
</dbReference>
<dbReference type="Pfam" id="PF08245">
    <property type="entry name" value="Mur_ligase_M"/>
    <property type="match status" value="1"/>
</dbReference>
<dbReference type="SUPFAM" id="SSF51984">
    <property type="entry name" value="MurCD N-terminal domain"/>
    <property type="match status" value="1"/>
</dbReference>
<dbReference type="SUPFAM" id="SSF53623">
    <property type="entry name" value="MurD-like peptide ligases, catalytic domain"/>
    <property type="match status" value="1"/>
</dbReference>
<dbReference type="SUPFAM" id="SSF53244">
    <property type="entry name" value="MurD-like peptide ligases, peptide-binding domain"/>
    <property type="match status" value="1"/>
</dbReference>
<sequence>MTSMTATNAQPFTIVNVPEMRRVQRIHFVGIGGAGMAGIAEVLLNQGYQISGSDIAENANTERLRCLGATVVLGHMANNIEGASVVVVSSAIKADNAELVAAHQLRVPVVRRAEMLAELMRFRHGIAVAGTHGKTTTTSLVASIFAEAGRDPTFVIGGLLNSAGSNARLGNSKYLIAEADESDASFLHLQPMVAIVTNIEADHMDTYEGDFNKLLDTYVEFLHNLPFYGLAVMCVDDPVVSDLIPRLGRQTMTYGFSEAADVRAIDYKQTASESCFTILRKGLKPLDVCLNLPGKHNVLNALAAVAVATDEGINDEAIKSALNKFEGIGRRFQHYGNFAISDKDSNKEPGEVMLVDDYGHHPSEVAATIQAAREGWPERRLVMAFQPHRYSRTRDLYEDFVNVLSQVDVLLMLEVYSAGETPVSGADSRSLCRSIRQRGQIDPVYVATVDDMPEVLESVLAPGDLLLTQGAGNIGALAKRIATEVLSHES</sequence>
<keyword id="KW-0067">ATP-binding</keyword>
<keyword id="KW-0131">Cell cycle</keyword>
<keyword id="KW-0132">Cell division</keyword>
<keyword id="KW-0133">Cell shape</keyword>
<keyword id="KW-0961">Cell wall biogenesis/degradation</keyword>
<keyword id="KW-0963">Cytoplasm</keyword>
<keyword id="KW-0436">Ligase</keyword>
<keyword id="KW-0547">Nucleotide-binding</keyword>
<keyword id="KW-0573">Peptidoglycan synthesis</keyword>
<keyword id="KW-1185">Reference proteome</keyword>
<reference key="1">
    <citation type="journal article" date="2004" name="Proc. Natl. Acad. Sci. U.S.A.">
        <title>Genome sequence of the deep-sea gamma-proteobacterium Idiomarina loihiensis reveals amino acid fermentation as a source of carbon and energy.</title>
        <authorList>
            <person name="Hou S."/>
            <person name="Saw J.H."/>
            <person name="Lee K.S."/>
            <person name="Freitas T.A."/>
            <person name="Belisle C."/>
            <person name="Kawarabayasi Y."/>
            <person name="Donachie S.P."/>
            <person name="Pikina A."/>
            <person name="Galperin M.Y."/>
            <person name="Koonin E.V."/>
            <person name="Makarova K.S."/>
            <person name="Omelchenko M.V."/>
            <person name="Sorokin A."/>
            <person name="Wolf Y.I."/>
            <person name="Li Q.X."/>
            <person name="Keum Y.S."/>
            <person name="Campbell S."/>
            <person name="Denery J."/>
            <person name="Aizawa S."/>
            <person name="Shibata S."/>
            <person name="Malahoff A."/>
            <person name="Alam M."/>
        </authorList>
    </citation>
    <scope>NUCLEOTIDE SEQUENCE [LARGE SCALE GENOMIC DNA]</scope>
    <source>
        <strain>ATCC BAA-735 / DSM 15497 / L2-TR</strain>
    </source>
</reference>
<evidence type="ECO:0000255" key="1">
    <source>
        <dbReference type="HAMAP-Rule" id="MF_00046"/>
    </source>
</evidence>
<proteinExistence type="inferred from homology"/>
<name>MURC_IDILO</name>
<gene>
    <name evidence="1" type="primary">murC</name>
    <name type="ordered locus">IL0437</name>
</gene>
<protein>
    <recommendedName>
        <fullName evidence="1">UDP-N-acetylmuramate--L-alanine ligase</fullName>
        <ecNumber evidence="1">6.3.2.8</ecNumber>
    </recommendedName>
    <alternativeName>
        <fullName evidence="1">UDP-N-acetylmuramoyl-L-alanine synthetase</fullName>
    </alternativeName>
</protein>
<comment type="function">
    <text evidence="1">Cell wall formation.</text>
</comment>
<comment type="catalytic activity">
    <reaction evidence="1">
        <text>UDP-N-acetyl-alpha-D-muramate + L-alanine + ATP = UDP-N-acetyl-alpha-D-muramoyl-L-alanine + ADP + phosphate + H(+)</text>
        <dbReference type="Rhea" id="RHEA:23372"/>
        <dbReference type="ChEBI" id="CHEBI:15378"/>
        <dbReference type="ChEBI" id="CHEBI:30616"/>
        <dbReference type="ChEBI" id="CHEBI:43474"/>
        <dbReference type="ChEBI" id="CHEBI:57972"/>
        <dbReference type="ChEBI" id="CHEBI:70757"/>
        <dbReference type="ChEBI" id="CHEBI:83898"/>
        <dbReference type="ChEBI" id="CHEBI:456216"/>
        <dbReference type="EC" id="6.3.2.8"/>
    </reaction>
</comment>
<comment type="pathway">
    <text evidence="1">Cell wall biogenesis; peptidoglycan biosynthesis.</text>
</comment>
<comment type="subcellular location">
    <subcellularLocation>
        <location evidence="1">Cytoplasm</location>
    </subcellularLocation>
</comment>
<comment type="similarity">
    <text evidence="1">Belongs to the MurCDEF family.</text>
</comment>
<organism>
    <name type="scientific">Idiomarina loihiensis (strain ATCC BAA-735 / DSM 15497 / L2-TR)</name>
    <dbReference type="NCBI Taxonomy" id="283942"/>
    <lineage>
        <taxon>Bacteria</taxon>
        <taxon>Pseudomonadati</taxon>
        <taxon>Pseudomonadota</taxon>
        <taxon>Gammaproteobacteria</taxon>
        <taxon>Alteromonadales</taxon>
        <taxon>Idiomarinaceae</taxon>
        <taxon>Idiomarina</taxon>
    </lineage>
</organism>